<evidence type="ECO:0000255" key="1">
    <source>
        <dbReference type="HAMAP-Rule" id="MF_04148"/>
    </source>
</evidence>
<evidence type="ECO:0000269" key="2">
    <source>
    </source>
</evidence>
<evidence type="ECO:0000269" key="3">
    <source>
    </source>
</evidence>
<evidence type="ECO:0000269" key="4">
    <source>
    </source>
</evidence>
<evidence type="ECO:0000269" key="5">
    <source>
    </source>
</evidence>
<evidence type="ECO:0000303" key="6">
    <source>
    </source>
</evidence>
<evidence type="ECO:0000305" key="7">
    <source>
    </source>
</evidence>
<evidence type="ECO:0000305" key="8">
    <source>
    </source>
</evidence>
<evidence type="ECO:0007744" key="9">
    <source>
        <dbReference type="PDB" id="4DKW"/>
    </source>
</evidence>
<evidence type="ECO:0007829" key="10">
    <source>
        <dbReference type="PDB" id="4DKW"/>
    </source>
</evidence>
<evidence type="ECO:0007829" key="11">
    <source>
        <dbReference type="PDB" id="6XMI"/>
    </source>
</evidence>
<reference key="1">
    <citation type="journal article" date="1991" name="Virology">
        <title>Nucleotide sequence of the bacteriophage P22 genes required for DNA packaging.</title>
        <authorList>
            <person name="Eppler K."/>
            <person name="Wyckoff E."/>
            <person name="Goates J."/>
            <person name="Parr R."/>
            <person name="Casjens S."/>
        </authorList>
    </citation>
    <scope>NUCLEOTIDE SEQUENCE [GENOMIC DNA]</scope>
    <scope>PROTEIN SEQUENCE OF 1-8</scope>
</reference>
<reference key="2">
    <citation type="journal article" date="2000" name="J. Bacteriol.">
        <title>Sequence of the genome of Salmonella bacteriophage P22.</title>
        <authorList>
            <person name="Vander Byl C.S."/>
            <person name="Kropinski A.M.B."/>
        </authorList>
    </citation>
    <scope>NUCLEOTIDE SEQUENCE [LARGE SCALE GENOMIC DNA]</scope>
</reference>
<reference key="3">
    <citation type="journal article" date="2003" name="J. Bacteriol.">
        <title>Corrected sequence of the bacteriophage P22 genome.</title>
        <authorList>
            <person name="Pedulla M.L."/>
            <person name="Ford M.E."/>
            <person name="Karthikeyan T."/>
            <person name="Houtz J.M."/>
            <person name="Hendrix R.W."/>
            <person name="Hatfull G.F."/>
            <person name="Poteete A.R."/>
            <person name="Gilcrease E.B."/>
            <person name="Winn-Stapley D.A."/>
            <person name="Casjens S.R."/>
        </authorList>
    </citation>
    <scope>NUCLEOTIDE SEQUENCE [LARGE SCALE GENOMIC DNA]</scope>
</reference>
<reference key="4">
    <citation type="journal article" date="2007" name="J. Mol. Biol.">
        <title>Subunit conformations and assembly states of a DNA-translocating motor: the terminase of bacteriophage P22.</title>
        <authorList>
            <person name="Nemecek D."/>
            <person name="Gilcrease E.B."/>
            <person name="Kang S."/>
            <person name="Prevelige P.E. Jr."/>
            <person name="Casjens S."/>
            <person name="Thomas G.J. Jr."/>
        </authorList>
    </citation>
    <scope>INTERACTION WITH THE TERMINASE SMALL SUBUNIT</scope>
</reference>
<reference key="5">
    <citation type="journal article" date="2008" name="Annu. Rev. Genet.">
        <title>The bacteriophage DNA packaging motor.</title>
        <authorList>
            <person name="Rao V.B."/>
            <person name="Feiss M."/>
        </authorList>
    </citation>
    <scope>REVIEW</scope>
</reference>
<reference key="6">
    <citation type="journal article" date="2012" name="Structure">
        <title>Small terminase couples viral DNA binding to genome-packaging ATPase activity.</title>
        <authorList>
            <person name="Roy A."/>
            <person name="Bhardwaj A."/>
            <person name="Datta P."/>
            <person name="Lander G.C."/>
            <person name="Cingolani G."/>
        </authorList>
    </citation>
    <scope>CATALYTIC ACTIVITY</scope>
    <scope>FUNCTION</scope>
</reference>
<reference key="7">
    <citation type="journal article" date="2015" name="J. Mol. Biol.">
        <title>Architecture of the Complex Formed by Large and Small Terminase Subunits from Bacteriophage P22.</title>
        <authorList>
            <person name="McNulty R."/>
            <person name="Lokareddy R.K."/>
            <person name="Roy A."/>
            <person name="Yang Y."/>
            <person name="Lander G."/>
            <person name="Heck A.J."/>
            <person name="Johnson J.E."/>
            <person name="Cingolani G."/>
        </authorList>
    </citation>
    <scope>INTERACTION WITH THE TERMINASE SMALL SUBUNIT</scope>
    <scope>SUBUNIT</scope>
    <scope>DOMAIN</scope>
</reference>
<reference key="8">
    <citation type="journal article" date="2017" name="Nat. Commun.">
        <title>Portal protein functions akin to a DNA-sensor that couples genome-packaging to icosahedral capsid maturation.</title>
        <authorList>
            <person name="Lokareddy R.K."/>
            <person name="Sankhala R.S."/>
            <person name="Roy A."/>
            <person name="Afonine P.V."/>
            <person name="Motwani T."/>
            <person name="Teschke C.M."/>
            <person name="Parent K.N."/>
            <person name="Cingolani G."/>
        </authorList>
    </citation>
    <scope>INTERACTION WITH THE PORTAL PROTEIN</scope>
</reference>
<reference evidence="9" key="9">
    <citation type="journal article" date="2012" name="J. Biol. Chem.">
        <title>Structure of p22 headful packaging nuclease.</title>
        <authorList>
            <person name="Roy A."/>
            <person name="Cingolani G."/>
        </authorList>
    </citation>
    <scope>X-RAY CRYSTALLOGRAPHY (2.02 ANGSTROMS) OF 289-499</scope>
    <scope>COFACTOR</scope>
    <scope>DOMAIN</scope>
    <scope>CATALYTIC ACTIVITY</scope>
</reference>
<name>TERL_BPP22</name>
<sequence>MELDAILDNLSDEEQIELLELLEEEENYRNTHLLYEFAPYSKQREFIDAGHDYPERCFMAGNQLGKSFTGAAEVAFHLTGRYPGTKGYPADGKYGGEWKGKRFYEPVVFWIGGETNETVTKTTQRILCGRIEENDEPGYGSIPKEDIISWKKSPFFPNLVDHLLVKHHTADGVEDGISICYFKPYSQGRARWQGDTIHGVWFDEEPPYSIYGEGLTRTNKYGQFSILTFTPLMGMSDVVTKFLKNPSKSQKVVNMTIYDAEHYTDEQKEQIIASYPEHEREARARGIPTMGSGRIFQIPEETIKCQPFECPDHFYVIDAQDFGWNHPQAHIQLWWDKDADVFYLARVWKKSENTAVQAWGAVKSWANKIPVAWPHDGHQHEKGGGEQLKTQYADAGFSMLPDHATFPDGGNSVESGISELRDLMLEGRFKVFNTCEPFFEEFRLYHRDENGKIVKTNDDVLDATRYGYMMRRFARMMRDIRKPKEKKIPAPIRPVRRGR</sequence>
<proteinExistence type="evidence at protein level"/>
<gene>
    <name type="primary">2</name>
</gene>
<comment type="function">
    <text evidence="1 3 8">The terminase large subunit acts as an ATP driven molecular motor necessary for viral DNA translocation into empty capsids and as an endonuclease that cuts the viral genome to initiate and to end a packaging reaction. The terminase lies at a unique vertex of the procapsid and is composed of two subunits, a small terminase subunit involved in viral DNA recognition (packaging 'pac' sequence), and a large terminase subunit possessing endonucleolytic and ATPase activities (Probable). Both terminase subunits heterooligomerize and are docked on the portal protein to form the packaging machine (PubMed:22771211). Once the capsid is packaged with the DNA (headful packaging), the terminase cleaves the viral genome concatemer and is substituted by the tail (Probable).</text>
</comment>
<comment type="cofactor">
    <cofactor evidence="1 2">
        <name>Mg(2+)</name>
        <dbReference type="ChEBI" id="CHEBI:18420"/>
    </cofactor>
    <text evidence="1 2">Nuclease activity probably requires 2 Mg(2+) ions per subunit.</text>
</comment>
<comment type="subunit">
    <text evidence="1 4 5">Interacts with the terminase small subunit; the active complex is composed of dimer of terminase large subunits and a nonamer ring of terminase small subunits (PubMed:26301600). Interacts with the portal protein; this interaction allows the packaging of viral DNA (PubMed:28134243).</text>
</comment>
<comment type="domain">
    <text evidence="1 2 4">The ATPase region is in the N-terminus, whereas the nuclease region is in the C-terminus.</text>
</comment>
<comment type="similarity">
    <text evidence="1">Belongs to the Lederbergvirus large terminase family.</text>
</comment>
<comment type="caution">
    <text evidence="7">His-326 has proposed to bind the second magnesium, but this is not in accordance with the sites identified in phage G20c and Thermus thermophilus RuvC, and with the mutagenesis results in phage T4.</text>
</comment>
<keyword id="KW-0002">3D-structure</keyword>
<keyword id="KW-0067">ATP-binding</keyword>
<keyword id="KW-0903">Direct protein sequencing</keyword>
<keyword id="KW-0255">Endonuclease</keyword>
<keyword id="KW-0378">Hydrolase</keyword>
<keyword id="KW-0426">Late protein</keyword>
<keyword id="KW-0460">Magnesium</keyword>
<keyword id="KW-0479">Metal-binding</keyword>
<keyword id="KW-0540">Nuclease</keyword>
<keyword id="KW-0547">Nucleotide-binding</keyword>
<keyword id="KW-1185">Reference proteome</keyword>
<keyword id="KW-0231">Viral genome packaging</keyword>
<keyword id="KW-1188">Viral release from host cell</keyword>
<accession>P26745</accession>
<accession>Q7PCJ5</accession>
<organism>
    <name type="scientific">Salmonella phage P22</name>
    <name type="common">Bacteriophage P22</name>
    <dbReference type="NCBI Taxonomy" id="10754"/>
    <lineage>
        <taxon>Viruses</taxon>
        <taxon>Duplodnaviria</taxon>
        <taxon>Heunggongvirae</taxon>
        <taxon>Uroviricota</taxon>
        <taxon>Caudoviricetes</taxon>
        <taxon>Lederbergvirus</taxon>
    </lineage>
</organism>
<protein>
    <recommendedName>
        <fullName evidence="1 6">Terminase, large subunit</fullName>
    </recommendedName>
    <alternativeName>
        <fullName evidence="1">DNA-packaging protein gp2</fullName>
    </alternativeName>
    <domain>
        <recommendedName>
            <fullName evidence="1">Endonuclease</fullName>
            <ecNumber evidence="1 2">3.1.21.-</ecNumber>
        </recommendedName>
    </domain>
    <domain>
        <recommendedName>
            <fullName evidence="1">ATPase</fullName>
            <ecNumber evidence="1 3">3.6.4.-</ecNumber>
        </recommendedName>
    </domain>
</protein>
<dbReference type="EC" id="3.1.21.-" evidence="1 2"/>
<dbReference type="EC" id="3.6.4.-" evidence="1 3"/>
<dbReference type="EMBL" id="M59749">
    <property type="protein sequence ID" value="AAA72959.1"/>
    <property type="molecule type" value="Genomic_DNA"/>
</dbReference>
<dbReference type="EMBL" id="AF217253">
    <property type="protein sequence ID" value="AAF75044.1"/>
    <property type="molecule type" value="Genomic_DNA"/>
</dbReference>
<dbReference type="EMBL" id="BK000583">
    <property type="protein sequence ID" value="DAA00977.1"/>
    <property type="molecule type" value="Genomic_DNA"/>
</dbReference>
<dbReference type="PIR" id="B40474">
    <property type="entry name" value="Z2BP22"/>
</dbReference>
<dbReference type="RefSeq" id="YP_063734.1">
    <property type="nucleotide sequence ID" value="NC_002371.2"/>
</dbReference>
<dbReference type="PDB" id="4DKW">
    <property type="method" value="X-ray"/>
    <property type="resolution" value="2.02 A"/>
    <property type="chains" value="A/B/C/D=289-499"/>
</dbReference>
<dbReference type="PDB" id="6VI1">
    <property type="method" value="X-ray"/>
    <property type="resolution" value="2.40 A"/>
    <property type="chains" value="M/N/O/P/Q/R=1-33"/>
</dbReference>
<dbReference type="PDB" id="6XMI">
    <property type="method" value="X-ray"/>
    <property type="resolution" value="1.51 A"/>
    <property type="chains" value="C/F=1-33"/>
</dbReference>
<dbReference type="PDBsum" id="4DKW"/>
<dbReference type="PDBsum" id="6VI1"/>
<dbReference type="PDBsum" id="6XMI"/>
<dbReference type="SMR" id="P26745"/>
<dbReference type="DIP" id="DIP-59856N"/>
<dbReference type="IntAct" id="P26745">
    <property type="interactions" value="1"/>
</dbReference>
<dbReference type="ABCD" id="P26745">
    <property type="antibodies" value="1 sequenced antibody"/>
</dbReference>
<dbReference type="GeneID" id="2944239"/>
<dbReference type="KEGG" id="vg:2944239"/>
<dbReference type="OrthoDB" id="1351at10239"/>
<dbReference type="EvolutionaryTrace" id="P26745"/>
<dbReference type="Proteomes" id="UP000001795">
    <property type="component" value="Segment"/>
</dbReference>
<dbReference type="Proteomes" id="UP000007960">
    <property type="component" value="Segment"/>
</dbReference>
<dbReference type="GO" id="GO:0043493">
    <property type="term" value="C:viral terminase complex"/>
    <property type="evidence" value="ECO:0000314"/>
    <property type="project" value="UniProtKB"/>
</dbReference>
<dbReference type="GO" id="GO:0098009">
    <property type="term" value="C:viral terminase, large subunit"/>
    <property type="evidence" value="ECO:0000314"/>
    <property type="project" value="UniProtKB"/>
</dbReference>
<dbReference type="GO" id="GO:0005524">
    <property type="term" value="F:ATP binding"/>
    <property type="evidence" value="ECO:0007669"/>
    <property type="project" value="UniProtKB-KW"/>
</dbReference>
<dbReference type="GO" id="GO:0016887">
    <property type="term" value="F:ATP hydrolysis activity"/>
    <property type="evidence" value="ECO:0007669"/>
    <property type="project" value="InterPro"/>
</dbReference>
<dbReference type="GO" id="GO:0004519">
    <property type="term" value="F:endonuclease activity"/>
    <property type="evidence" value="ECO:0007669"/>
    <property type="project" value="UniProtKB-UniRule"/>
</dbReference>
<dbReference type="GO" id="GO:0046872">
    <property type="term" value="F:metal ion binding"/>
    <property type="evidence" value="ECO:0007669"/>
    <property type="project" value="UniProtKB-UniRule"/>
</dbReference>
<dbReference type="GO" id="GO:0051276">
    <property type="term" value="P:chromosome organization"/>
    <property type="evidence" value="ECO:0007669"/>
    <property type="project" value="UniProtKB-UniRule"/>
</dbReference>
<dbReference type="GO" id="GO:0019073">
    <property type="term" value="P:viral DNA genome packaging"/>
    <property type="evidence" value="ECO:0007669"/>
    <property type="project" value="UniProtKB-UniRule"/>
</dbReference>
<dbReference type="FunFam" id="3.30.420.280:FF:000002">
    <property type="entry name" value="Terminase large subunit"/>
    <property type="match status" value="1"/>
</dbReference>
<dbReference type="FunFam" id="3.40.50.300:FF:001183">
    <property type="entry name" value="Terminase, large subunit"/>
    <property type="match status" value="1"/>
</dbReference>
<dbReference type="Gene3D" id="3.30.420.280">
    <property type="match status" value="1"/>
</dbReference>
<dbReference type="Gene3D" id="3.40.50.300">
    <property type="entry name" value="P-loop containing nucleotide triphosphate hydrolases"/>
    <property type="match status" value="1"/>
</dbReference>
<dbReference type="HAMAP" id="MF_04148">
    <property type="entry name" value="TERL_BPP22"/>
    <property type="match status" value="1"/>
</dbReference>
<dbReference type="InterPro" id="IPR027417">
    <property type="entry name" value="P-loop_NTPase"/>
</dbReference>
<dbReference type="InterPro" id="IPR035421">
    <property type="entry name" value="Terminase_6C"/>
</dbReference>
<dbReference type="InterPro" id="IPR044265">
    <property type="entry name" value="Terminase_large_su_BPP22"/>
</dbReference>
<dbReference type="Pfam" id="PF17289">
    <property type="entry name" value="Terminase_6C"/>
    <property type="match status" value="1"/>
</dbReference>
<dbReference type="Pfam" id="PF03237">
    <property type="entry name" value="Terminase_6N"/>
    <property type="match status" value="1"/>
</dbReference>
<feature type="chain" id="PRO_0000077749" description="Terminase, large subunit">
    <location>
        <begin position="1"/>
        <end position="499"/>
    </location>
</feature>
<feature type="region of interest" description="ATPase activity" evidence="1 2 4">
    <location>
        <begin position="1"/>
        <end position="286"/>
    </location>
</feature>
<feature type="region of interest" description="Interaction with the terminase small subunit" evidence="1 4">
    <location>
        <begin position="1"/>
        <end position="58"/>
    </location>
</feature>
<feature type="region of interest" description="Nuclease activity" evidence="1 2 4">
    <location>
        <begin position="312"/>
        <end position="482"/>
    </location>
</feature>
<feature type="short sequence motif" description="Walker A motif" evidence="1">
    <location>
        <begin position="60"/>
        <end position="67"/>
    </location>
</feature>
<feature type="short sequence motif" description="Walker B motif" evidence="1">
    <location>
        <begin position="199"/>
        <end position="204"/>
    </location>
</feature>
<feature type="active site" description="For ATPase activity" evidence="1">
    <location>
        <position position="204"/>
    </location>
</feature>
<feature type="binding site" evidence="1 2">
    <location>
        <position position="321"/>
    </location>
    <ligand>
        <name>Mg(2+)</name>
        <dbReference type="ChEBI" id="CHEBI:18420"/>
        <note>catalytic; for nuclease activity</note>
    </ligand>
</feature>
<feature type="binding site" evidence="1 2">
    <location>
        <position position="459"/>
    </location>
    <ligand>
        <name>Mg(2+)</name>
        <dbReference type="ChEBI" id="CHEBI:18420"/>
        <note>catalytic; for nuclease activity</note>
    </ligand>
</feature>
<feature type="helix" evidence="11">
    <location>
        <begin position="4"/>
        <end position="7"/>
    </location>
</feature>
<feature type="helix" evidence="11">
    <location>
        <begin position="12"/>
        <end position="31"/>
    </location>
</feature>
<feature type="strand" evidence="10">
    <location>
        <begin position="293"/>
        <end position="295"/>
    </location>
</feature>
<feature type="helix" evidence="10">
    <location>
        <begin position="300"/>
        <end position="303"/>
    </location>
</feature>
<feature type="strand" evidence="10">
    <location>
        <begin position="314"/>
        <end position="321"/>
    </location>
</feature>
<feature type="strand" evidence="10">
    <location>
        <begin position="324"/>
        <end position="326"/>
    </location>
</feature>
<feature type="strand" evidence="10">
    <location>
        <begin position="328"/>
        <end position="336"/>
    </location>
</feature>
<feature type="turn" evidence="10">
    <location>
        <begin position="337"/>
        <end position="340"/>
    </location>
</feature>
<feature type="strand" evidence="10">
    <location>
        <begin position="341"/>
        <end position="352"/>
    </location>
</feature>
<feature type="helix" evidence="10">
    <location>
        <begin position="355"/>
        <end position="366"/>
    </location>
</feature>
<feature type="strand" evidence="10">
    <location>
        <begin position="370"/>
        <end position="372"/>
    </location>
</feature>
<feature type="strand" evidence="10">
    <location>
        <begin position="379"/>
        <end position="383"/>
    </location>
</feature>
<feature type="helix" evidence="10">
    <location>
        <begin position="385"/>
        <end position="395"/>
    </location>
</feature>
<feature type="helix" evidence="10">
    <location>
        <begin position="413"/>
        <end position="425"/>
    </location>
</feature>
<feature type="strand" evidence="10">
    <location>
        <begin position="429"/>
        <end position="432"/>
    </location>
</feature>
<feature type="helix" evidence="10">
    <location>
        <begin position="436"/>
        <end position="444"/>
    </location>
</feature>
<feature type="helix" evidence="10">
    <location>
        <begin position="459"/>
        <end position="469"/>
    </location>
</feature>
<feature type="helix" evidence="10">
    <location>
        <begin position="471"/>
        <end position="473"/>
    </location>
</feature>
<feature type="helix" evidence="10">
    <location>
        <begin position="477"/>
        <end position="481"/>
    </location>
</feature>
<organismHost>
    <name type="scientific">Salmonella typhimurium</name>
    <dbReference type="NCBI Taxonomy" id="90371"/>
</organismHost>